<reference key="1">
    <citation type="journal article" date="2004" name="Nature">
        <title>Genome evolution in yeasts.</title>
        <authorList>
            <person name="Dujon B."/>
            <person name="Sherman D."/>
            <person name="Fischer G."/>
            <person name="Durrens P."/>
            <person name="Casaregola S."/>
            <person name="Lafontaine I."/>
            <person name="de Montigny J."/>
            <person name="Marck C."/>
            <person name="Neuveglise C."/>
            <person name="Talla E."/>
            <person name="Goffard N."/>
            <person name="Frangeul L."/>
            <person name="Aigle M."/>
            <person name="Anthouard V."/>
            <person name="Babour A."/>
            <person name="Barbe V."/>
            <person name="Barnay S."/>
            <person name="Blanchin S."/>
            <person name="Beckerich J.-M."/>
            <person name="Beyne E."/>
            <person name="Bleykasten C."/>
            <person name="Boisrame A."/>
            <person name="Boyer J."/>
            <person name="Cattolico L."/>
            <person name="Confanioleri F."/>
            <person name="de Daruvar A."/>
            <person name="Despons L."/>
            <person name="Fabre E."/>
            <person name="Fairhead C."/>
            <person name="Ferry-Dumazet H."/>
            <person name="Groppi A."/>
            <person name="Hantraye F."/>
            <person name="Hennequin C."/>
            <person name="Jauniaux N."/>
            <person name="Joyet P."/>
            <person name="Kachouri R."/>
            <person name="Kerrest A."/>
            <person name="Koszul R."/>
            <person name="Lemaire M."/>
            <person name="Lesur I."/>
            <person name="Ma L."/>
            <person name="Muller H."/>
            <person name="Nicaud J.-M."/>
            <person name="Nikolski M."/>
            <person name="Oztas S."/>
            <person name="Ozier-Kalogeropoulos O."/>
            <person name="Pellenz S."/>
            <person name="Potier S."/>
            <person name="Richard G.-F."/>
            <person name="Straub M.-L."/>
            <person name="Suleau A."/>
            <person name="Swennen D."/>
            <person name="Tekaia F."/>
            <person name="Wesolowski-Louvel M."/>
            <person name="Westhof E."/>
            <person name="Wirth B."/>
            <person name="Zeniou-Meyer M."/>
            <person name="Zivanovic Y."/>
            <person name="Bolotin-Fukuhara M."/>
            <person name="Thierry A."/>
            <person name="Bouchier C."/>
            <person name="Caudron B."/>
            <person name="Scarpelli C."/>
            <person name="Gaillardin C."/>
            <person name="Weissenbach J."/>
            <person name="Wincker P."/>
            <person name="Souciet J.-L."/>
        </authorList>
    </citation>
    <scope>NUCLEOTIDE SEQUENCE [LARGE SCALE GENOMIC DNA]</scope>
    <source>
        <strain>ATCC 2001 / BCRC 20586 / JCM 3761 / NBRC 0622 / NRRL Y-65 / CBS 138</strain>
    </source>
</reference>
<accession>Q6FUV2</accession>
<proteinExistence type="inferred from homology"/>
<organism>
    <name type="scientific">Candida glabrata (strain ATCC 2001 / BCRC 20586 / JCM 3761 / NBRC 0622 / NRRL Y-65 / CBS 138)</name>
    <name type="common">Yeast</name>
    <name type="synonym">Nakaseomyces glabratus</name>
    <dbReference type="NCBI Taxonomy" id="284593"/>
    <lineage>
        <taxon>Eukaryota</taxon>
        <taxon>Fungi</taxon>
        <taxon>Dikarya</taxon>
        <taxon>Ascomycota</taxon>
        <taxon>Saccharomycotina</taxon>
        <taxon>Saccharomycetes</taxon>
        <taxon>Saccharomycetales</taxon>
        <taxon>Saccharomycetaceae</taxon>
        <taxon>Nakaseomyces</taxon>
    </lineage>
</organism>
<comment type="function">
    <text evidence="1">Pyrophosphatase that hydrolyzes non-canonical purine nucleotides such as inosine triphosphate (ITP), deoxyinosine triphosphate (dITP) or xanthosine 5'-triphosphate (XTP) to their respective monophosphate derivatives. The enzyme does not distinguish between the deoxy- and ribose forms. Probably excludes non-canonical purines from RNA and DNA precursor pools, thus preventing their incorporation into RNA and DNA and avoiding chromosomal lesions.</text>
</comment>
<comment type="catalytic activity">
    <reaction evidence="1">
        <text>ITP + H2O = IMP + diphosphate + H(+)</text>
        <dbReference type="Rhea" id="RHEA:29399"/>
        <dbReference type="ChEBI" id="CHEBI:15377"/>
        <dbReference type="ChEBI" id="CHEBI:15378"/>
        <dbReference type="ChEBI" id="CHEBI:33019"/>
        <dbReference type="ChEBI" id="CHEBI:58053"/>
        <dbReference type="ChEBI" id="CHEBI:61402"/>
        <dbReference type="EC" id="3.6.1.66"/>
    </reaction>
    <physiologicalReaction direction="left-to-right" evidence="1">
        <dbReference type="Rhea" id="RHEA:29400"/>
    </physiologicalReaction>
</comment>
<comment type="catalytic activity">
    <reaction evidence="1">
        <text>dITP + H2O = dIMP + diphosphate + H(+)</text>
        <dbReference type="Rhea" id="RHEA:28342"/>
        <dbReference type="ChEBI" id="CHEBI:15377"/>
        <dbReference type="ChEBI" id="CHEBI:15378"/>
        <dbReference type="ChEBI" id="CHEBI:33019"/>
        <dbReference type="ChEBI" id="CHEBI:61194"/>
        <dbReference type="ChEBI" id="CHEBI:61382"/>
        <dbReference type="EC" id="3.6.1.66"/>
    </reaction>
    <physiologicalReaction direction="left-to-right" evidence="1">
        <dbReference type="Rhea" id="RHEA:28343"/>
    </physiologicalReaction>
</comment>
<comment type="catalytic activity">
    <reaction evidence="1">
        <text>XTP + H2O = XMP + diphosphate + H(+)</text>
        <dbReference type="Rhea" id="RHEA:28610"/>
        <dbReference type="ChEBI" id="CHEBI:15377"/>
        <dbReference type="ChEBI" id="CHEBI:15378"/>
        <dbReference type="ChEBI" id="CHEBI:33019"/>
        <dbReference type="ChEBI" id="CHEBI:57464"/>
        <dbReference type="ChEBI" id="CHEBI:61314"/>
        <dbReference type="EC" id="3.6.1.66"/>
    </reaction>
    <physiologicalReaction direction="left-to-right" evidence="1">
        <dbReference type="Rhea" id="RHEA:28611"/>
    </physiologicalReaction>
</comment>
<comment type="cofactor">
    <cofactor evidence="1">
        <name>Mg(2+)</name>
        <dbReference type="ChEBI" id="CHEBI:18420"/>
    </cofactor>
    <cofactor evidence="1">
        <name>Mn(2+)</name>
        <dbReference type="ChEBI" id="CHEBI:29035"/>
    </cofactor>
    <text evidence="1">Binds 1 divalent metal cation per subunit; can use either Mg(2+) or Mn(2+).</text>
</comment>
<comment type="subunit">
    <text evidence="1">Homodimer.</text>
</comment>
<comment type="subcellular location">
    <subcellularLocation>
        <location evidence="1">Cytoplasm</location>
    </subcellularLocation>
    <subcellularLocation>
        <location evidence="1">Nucleus</location>
    </subcellularLocation>
</comment>
<comment type="similarity">
    <text evidence="1">Belongs to the HAM1 NTPase family.</text>
</comment>
<name>ITPA_CANGA</name>
<gene>
    <name evidence="1" type="primary">HAM1</name>
    <name type="ordered locus">CAGL0F00429g</name>
</gene>
<dbReference type="EC" id="3.6.1.66" evidence="1"/>
<dbReference type="EMBL" id="CR380952">
    <property type="protein sequence ID" value="CAG58916.1"/>
    <property type="molecule type" value="Genomic_DNA"/>
</dbReference>
<dbReference type="RefSeq" id="XP_445992.1">
    <property type="nucleotide sequence ID" value="XM_445992.1"/>
</dbReference>
<dbReference type="SMR" id="Q6FUV2"/>
<dbReference type="FunCoup" id="Q6FUV2">
    <property type="interactions" value="773"/>
</dbReference>
<dbReference type="STRING" id="284593.Q6FUV2"/>
<dbReference type="EnsemblFungi" id="CAGL0F00429g-T">
    <property type="protein sequence ID" value="CAGL0F00429g-T-p1"/>
    <property type="gene ID" value="CAGL0F00429g"/>
</dbReference>
<dbReference type="KEGG" id="cgr:2887788"/>
<dbReference type="CGD" id="CAL0131098">
    <property type="gene designation" value="CAGL0F00429g"/>
</dbReference>
<dbReference type="VEuPathDB" id="FungiDB:B1J91_F00429g"/>
<dbReference type="VEuPathDB" id="FungiDB:CAGL0F00429g"/>
<dbReference type="eggNOG" id="KOG3222">
    <property type="taxonomic scope" value="Eukaryota"/>
</dbReference>
<dbReference type="HOGENOM" id="CLU_082080_1_1_1"/>
<dbReference type="InParanoid" id="Q6FUV2"/>
<dbReference type="OMA" id="YDPIFQP"/>
<dbReference type="Proteomes" id="UP000002428">
    <property type="component" value="Chromosome F"/>
</dbReference>
<dbReference type="GO" id="GO:0005737">
    <property type="term" value="C:cytoplasm"/>
    <property type="evidence" value="ECO:0007669"/>
    <property type="project" value="UniProtKB-SubCell"/>
</dbReference>
<dbReference type="GO" id="GO:0005634">
    <property type="term" value="C:nucleus"/>
    <property type="evidence" value="ECO:0007669"/>
    <property type="project" value="UniProtKB-SubCell"/>
</dbReference>
<dbReference type="GO" id="GO:0008828">
    <property type="term" value="F:dATP diphosphatase activity"/>
    <property type="evidence" value="ECO:0007669"/>
    <property type="project" value="EnsemblFungi"/>
</dbReference>
<dbReference type="GO" id="GO:0047840">
    <property type="term" value="F:dCTP diphosphatase activity"/>
    <property type="evidence" value="ECO:0007669"/>
    <property type="project" value="EnsemblFungi"/>
</dbReference>
<dbReference type="GO" id="GO:0036217">
    <property type="term" value="F:dGTP diphosphatase activity"/>
    <property type="evidence" value="ECO:0007669"/>
    <property type="project" value="EnsemblFungi"/>
</dbReference>
<dbReference type="GO" id="GO:0035870">
    <property type="term" value="F:dITP diphosphatase activity"/>
    <property type="evidence" value="ECO:0007669"/>
    <property type="project" value="EnsemblFungi"/>
</dbReference>
<dbReference type="GO" id="GO:0036218">
    <property type="term" value="F:dTTP diphosphatase activity"/>
    <property type="evidence" value="ECO:0007669"/>
    <property type="project" value="EnsemblFungi"/>
</dbReference>
<dbReference type="GO" id="GO:0004170">
    <property type="term" value="F:dUTP diphosphatase activity"/>
    <property type="evidence" value="ECO:0007669"/>
    <property type="project" value="EnsemblFungi"/>
</dbReference>
<dbReference type="GO" id="GO:0036219">
    <property type="term" value="F:GTP diphosphatase activity"/>
    <property type="evidence" value="ECO:0007669"/>
    <property type="project" value="EnsemblFungi"/>
</dbReference>
<dbReference type="GO" id="GO:0036220">
    <property type="term" value="F:ITP diphosphatase activity"/>
    <property type="evidence" value="ECO:0007669"/>
    <property type="project" value="EnsemblFungi"/>
</dbReference>
<dbReference type="GO" id="GO:0046872">
    <property type="term" value="F:metal ion binding"/>
    <property type="evidence" value="ECO:0007669"/>
    <property type="project" value="UniProtKB-KW"/>
</dbReference>
<dbReference type="GO" id="GO:0000166">
    <property type="term" value="F:nucleotide binding"/>
    <property type="evidence" value="ECO:0007669"/>
    <property type="project" value="UniProtKB-KW"/>
</dbReference>
<dbReference type="GO" id="GO:0036221">
    <property type="term" value="F:UTP diphosphatase activity"/>
    <property type="evidence" value="ECO:0007669"/>
    <property type="project" value="EnsemblFungi"/>
</dbReference>
<dbReference type="GO" id="GO:0036222">
    <property type="term" value="F:XTP diphosphatase activity"/>
    <property type="evidence" value="ECO:0007669"/>
    <property type="project" value="EnsemblFungi"/>
</dbReference>
<dbReference type="GO" id="GO:0009117">
    <property type="term" value="P:nucleotide metabolic process"/>
    <property type="evidence" value="ECO:0007669"/>
    <property type="project" value="UniProtKB-KW"/>
</dbReference>
<dbReference type="GO" id="GO:0009217">
    <property type="term" value="P:purine deoxyribonucleoside triphosphate catabolic process"/>
    <property type="evidence" value="ECO:0007669"/>
    <property type="project" value="EnsemblFungi"/>
</dbReference>
<dbReference type="GO" id="GO:0009213">
    <property type="term" value="P:pyrimidine deoxyribonucleoside triphosphate catabolic process"/>
    <property type="evidence" value="ECO:0007669"/>
    <property type="project" value="EnsemblFungi"/>
</dbReference>
<dbReference type="CDD" id="cd00515">
    <property type="entry name" value="HAM1"/>
    <property type="match status" value="1"/>
</dbReference>
<dbReference type="FunFam" id="3.90.950.10:FF:000009">
    <property type="entry name" value="Inosine triphosphate pyrophosphatase"/>
    <property type="match status" value="1"/>
</dbReference>
<dbReference type="Gene3D" id="3.90.950.10">
    <property type="match status" value="1"/>
</dbReference>
<dbReference type="HAMAP" id="MF_03148">
    <property type="entry name" value="HAM1_NTPase"/>
    <property type="match status" value="1"/>
</dbReference>
<dbReference type="InterPro" id="IPR027502">
    <property type="entry name" value="ITPase"/>
</dbReference>
<dbReference type="InterPro" id="IPR029001">
    <property type="entry name" value="ITPase-like_fam"/>
</dbReference>
<dbReference type="InterPro" id="IPR002637">
    <property type="entry name" value="RdgB/HAM1"/>
</dbReference>
<dbReference type="NCBIfam" id="TIGR00042">
    <property type="entry name" value="RdgB/HAM1 family non-canonical purine NTP pyrophosphatase"/>
    <property type="match status" value="1"/>
</dbReference>
<dbReference type="PANTHER" id="PTHR11067:SF9">
    <property type="entry name" value="INOSINE TRIPHOSPHATE PYROPHOSPHATASE"/>
    <property type="match status" value="1"/>
</dbReference>
<dbReference type="PANTHER" id="PTHR11067">
    <property type="entry name" value="INOSINE TRIPHOSPHATE PYROPHOSPHATASE/HAM1 PROTEIN"/>
    <property type="match status" value="1"/>
</dbReference>
<dbReference type="Pfam" id="PF01725">
    <property type="entry name" value="Ham1p_like"/>
    <property type="match status" value="1"/>
</dbReference>
<dbReference type="SUPFAM" id="SSF52972">
    <property type="entry name" value="ITPase-like"/>
    <property type="match status" value="1"/>
</dbReference>
<evidence type="ECO:0000255" key="1">
    <source>
        <dbReference type="HAMAP-Rule" id="MF_03148"/>
    </source>
</evidence>
<feature type="chain" id="PRO_0000413132" description="Inosine triphosphate pyrophosphatase">
    <location>
        <begin position="1"/>
        <end position="192"/>
    </location>
</feature>
<feature type="binding site" evidence="1">
    <location>
        <begin position="10"/>
        <end position="15"/>
    </location>
    <ligand>
        <name>ITP</name>
        <dbReference type="ChEBI" id="CHEBI:61402"/>
    </ligand>
</feature>
<feature type="binding site" evidence="1">
    <location>
        <position position="43"/>
    </location>
    <ligand>
        <name>Mg(2+)</name>
        <dbReference type="ChEBI" id="CHEBI:18420"/>
    </ligand>
</feature>
<feature type="binding site" evidence="1">
    <location>
        <position position="56"/>
    </location>
    <ligand>
        <name>ITP</name>
        <dbReference type="ChEBI" id="CHEBI:61402"/>
    </ligand>
</feature>
<feature type="binding site" evidence="1">
    <location>
        <begin position="74"/>
        <end position="75"/>
    </location>
    <ligand>
        <name>ITP</name>
        <dbReference type="ChEBI" id="CHEBI:61402"/>
    </ligand>
</feature>
<feature type="binding site" evidence="1">
    <location>
        <position position="91"/>
    </location>
    <ligand>
        <name>ITP</name>
        <dbReference type="ChEBI" id="CHEBI:61402"/>
    </ligand>
</feature>
<feature type="binding site" evidence="1">
    <location>
        <begin position="149"/>
        <end position="152"/>
    </location>
    <ligand>
        <name>ITP</name>
        <dbReference type="ChEBI" id="CHEBI:61402"/>
    </ligand>
</feature>
<feature type="binding site" evidence="1">
    <location>
        <position position="173"/>
    </location>
    <ligand>
        <name>ITP</name>
        <dbReference type="ChEBI" id="CHEBI:61402"/>
    </ligand>
</feature>
<feature type="binding site" evidence="1">
    <location>
        <begin position="178"/>
        <end position="179"/>
    </location>
    <ligand>
        <name>ITP</name>
        <dbReference type="ChEBI" id="CHEBI:61402"/>
    </ligand>
</feature>
<sequence>MAPTEITFVTGNANKLKEVQMLLAAEDKKGSITLKNEPLDLDELQDVDLKAIALTKCKQAVKELGVGTPVFVEDTALTFDEFNGLPGAYIKWFLKSMSLEKIVKLLEPYSNKGAEAITTIAYCDENGEYHIFQGITKGKIVDSRGPTNFGWDSIFEPLEGKGMTYAEMEKDFKNTLSHRGKAFVEFKKFLYA</sequence>
<protein>
    <recommendedName>
        <fullName evidence="1">Inosine triphosphate pyrophosphatase</fullName>
        <shortName evidence="1">ITPase</shortName>
        <shortName evidence="1">Inosine triphosphatase</shortName>
        <ecNumber evidence="1">3.6.1.66</ecNumber>
    </recommendedName>
    <alternativeName>
        <fullName evidence="1">Non-canonical purine NTP pyrophosphatase</fullName>
    </alternativeName>
    <alternativeName>
        <fullName evidence="1">Non-standard purine NTP pyrophosphatase</fullName>
    </alternativeName>
    <alternativeName>
        <fullName evidence="1">Nucleoside-triphosphate diphosphatase</fullName>
    </alternativeName>
    <alternativeName>
        <fullName evidence="1">Nucleoside-triphosphate pyrophosphatase</fullName>
        <shortName evidence="1">NTPase</shortName>
    </alternativeName>
    <alternativeName>
        <fullName evidence="1">XTP/dITP diphosphatase</fullName>
    </alternativeName>
</protein>
<keyword id="KW-0963">Cytoplasm</keyword>
<keyword id="KW-0378">Hydrolase</keyword>
<keyword id="KW-0460">Magnesium</keyword>
<keyword id="KW-0464">Manganese</keyword>
<keyword id="KW-0479">Metal-binding</keyword>
<keyword id="KW-0546">Nucleotide metabolism</keyword>
<keyword id="KW-0547">Nucleotide-binding</keyword>
<keyword id="KW-0539">Nucleus</keyword>
<keyword id="KW-1185">Reference proteome</keyword>